<sequence length="311" mass="33956">MAYKDLLNCKIITAFITPFHEDGSINFGAIPDLIEHLLAHHTDGILLAGTTAESPTLTHDEELELFAAVQKVVKGRVPLIAGVGTNETRDSIEFVKEVDAFGGFAAGLAIVPYYNKPSQEGMYQHFKAIADASNLPIIIYNIPGRVVVEMTPETMLRLAEHPNIIGVKECTSLANMAYLIEHRPEEFLIYTGEDGDAFHAMNLGADGVISVASHTNGDEMFEMLDAIEHNDIKKAAAIQRKFIPKVNALFSYPSPAPVKAVLNYLGFAAGPTRLPLVPAPEEDAKRIIKVVVDGDYQATKETVKGVLRPDY</sequence>
<reference key="1">
    <citation type="journal article" date="2007" name="J. Bacteriol.">
        <title>Genome-wide transcriptional changes in Streptococcus gordonii in response to competence signaling peptide.</title>
        <authorList>
            <person name="Vickerman M.M."/>
            <person name="Iobst S."/>
            <person name="Jesionowski A.M."/>
            <person name="Gill S.R."/>
        </authorList>
    </citation>
    <scope>NUCLEOTIDE SEQUENCE [LARGE SCALE GENOMIC DNA]</scope>
    <source>
        <strain>Challis / ATCC 35105 / BCRC 15272 / CH1 / DL1 / V288</strain>
    </source>
</reference>
<accession>A8AXI2</accession>
<comment type="function">
    <text evidence="1">Catalyzes the condensation of (S)-aspartate-beta-semialdehyde [(S)-ASA] and pyruvate to 4-hydroxy-tetrahydrodipicolinate (HTPA).</text>
</comment>
<comment type="catalytic activity">
    <reaction evidence="1">
        <text>L-aspartate 4-semialdehyde + pyruvate = (2S,4S)-4-hydroxy-2,3,4,5-tetrahydrodipicolinate + H2O + H(+)</text>
        <dbReference type="Rhea" id="RHEA:34171"/>
        <dbReference type="ChEBI" id="CHEBI:15361"/>
        <dbReference type="ChEBI" id="CHEBI:15377"/>
        <dbReference type="ChEBI" id="CHEBI:15378"/>
        <dbReference type="ChEBI" id="CHEBI:67139"/>
        <dbReference type="ChEBI" id="CHEBI:537519"/>
        <dbReference type="EC" id="4.3.3.7"/>
    </reaction>
</comment>
<comment type="pathway">
    <text evidence="1">Amino-acid biosynthesis; L-lysine biosynthesis via DAP pathway; (S)-tetrahydrodipicolinate from L-aspartate: step 3/4.</text>
</comment>
<comment type="subunit">
    <text evidence="1">Homotetramer; dimer of dimers.</text>
</comment>
<comment type="subcellular location">
    <subcellularLocation>
        <location evidence="1">Cytoplasm</location>
    </subcellularLocation>
</comment>
<comment type="similarity">
    <text evidence="1">Belongs to the DapA family.</text>
</comment>
<comment type="caution">
    <text evidence="2">Was originally thought to be a dihydrodipicolinate synthase (DHDPS), catalyzing the condensation of (S)-aspartate-beta-semialdehyde [(S)-ASA] and pyruvate to dihydrodipicolinate (DHDP). However, it was shown in E.coli that the product of the enzymatic reaction is not dihydrodipicolinate but in fact (4S)-4-hydroxy-2,3,4,5-tetrahydro-(2S)-dipicolinic acid (HTPA), and that the consecutive dehydration reaction leading to DHDP is not spontaneous but catalyzed by DapB.</text>
</comment>
<name>DAPA_STRGC</name>
<protein>
    <recommendedName>
        <fullName evidence="1">4-hydroxy-tetrahydrodipicolinate synthase</fullName>
        <shortName evidence="1">HTPA synthase</shortName>
        <ecNumber evidence="1">4.3.3.7</ecNumber>
    </recommendedName>
</protein>
<keyword id="KW-0028">Amino-acid biosynthesis</keyword>
<keyword id="KW-0963">Cytoplasm</keyword>
<keyword id="KW-0220">Diaminopimelate biosynthesis</keyword>
<keyword id="KW-0456">Lyase</keyword>
<keyword id="KW-0457">Lysine biosynthesis</keyword>
<keyword id="KW-1185">Reference proteome</keyword>
<keyword id="KW-0704">Schiff base</keyword>
<evidence type="ECO:0000255" key="1">
    <source>
        <dbReference type="HAMAP-Rule" id="MF_00418"/>
    </source>
</evidence>
<evidence type="ECO:0000305" key="2"/>
<organism>
    <name type="scientific">Streptococcus gordonii (strain Challis / ATCC 35105 / BCRC 15272 / CH1 / DL1 / V288)</name>
    <dbReference type="NCBI Taxonomy" id="467705"/>
    <lineage>
        <taxon>Bacteria</taxon>
        <taxon>Bacillati</taxon>
        <taxon>Bacillota</taxon>
        <taxon>Bacilli</taxon>
        <taxon>Lactobacillales</taxon>
        <taxon>Streptococcaceae</taxon>
        <taxon>Streptococcus</taxon>
    </lineage>
</organism>
<proteinExistence type="inferred from homology"/>
<dbReference type="EC" id="4.3.3.7" evidence="1"/>
<dbReference type="EMBL" id="CP000725">
    <property type="protein sequence ID" value="ABV10909.1"/>
    <property type="molecule type" value="Genomic_DNA"/>
</dbReference>
<dbReference type="RefSeq" id="WP_012000606.1">
    <property type="nucleotide sequence ID" value="NC_009785.1"/>
</dbReference>
<dbReference type="SMR" id="A8AXI2"/>
<dbReference type="STRING" id="467705.SGO_1205"/>
<dbReference type="KEGG" id="sgo:SGO_1205"/>
<dbReference type="eggNOG" id="COG0329">
    <property type="taxonomic scope" value="Bacteria"/>
</dbReference>
<dbReference type="HOGENOM" id="CLU_049343_7_1_9"/>
<dbReference type="UniPathway" id="UPA00034">
    <property type="reaction ID" value="UER00017"/>
</dbReference>
<dbReference type="Proteomes" id="UP000001131">
    <property type="component" value="Chromosome"/>
</dbReference>
<dbReference type="GO" id="GO:0005829">
    <property type="term" value="C:cytosol"/>
    <property type="evidence" value="ECO:0007669"/>
    <property type="project" value="TreeGrafter"/>
</dbReference>
<dbReference type="GO" id="GO:0008840">
    <property type="term" value="F:4-hydroxy-tetrahydrodipicolinate synthase activity"/>
    <property type="evidence" value="ECO:0007669"/>
    <property type="project" value="UniProtKB-UniRule"/>
</dbReference>
<dbReference type="GO" id="GO:0019877">
    <property type="term" value="P:diaminopimelate biosynthetic process"/>
    <property type="evidence" value="ECO:0007669"/>
    <property type="project" value="UniProtKB-UniRule"/>
</dbReference>
<dbReference type="GO" id="GO:0009089">
    <property type="term" value="P:lysine biosynthetic process via diaminopimelate"/>
    <property type="evidence" value="ECO:0007669"/>
    <property type="project" value="UniProtKB-UniRule"/>
</dbReference>
<dbReference type="CDD" id="cd00950">
    <property type="entry name" value="DHDPS"/>
    <property type="match status" value="1"/>
</dbReference>
<dbReference type="Gene3D" id="3.20.20.70">
    <property type="entry name" value="Aldolase class I"/>
    <property type="match status" value="1"/>
</dbReference>
<dbReference type="HAMAP" id="MF_00418">
    <property type="entry name" value="DapA"/>
    <property type="match status" value="1"/>
</dbReference>
<dbReference type="InterPro" id="IPR013785">
    <property type="entry name" value="Aldolase_TIM"/>
</dbReference>
<dbReference type="InterPro" id="IPR005263">
    <property type="entry name" value="DapA"/>
</dbReference>
<dbReference type="InterPro" id="IPR002220">
    <property type="entry name" value="DapA-like"/>
</dbReference>
<dbReference type="InterPro" id="IPR020625">
    <property type="entry name" value="Schiff_base-form_aldolases_AS"/>
</dbReference>
<dbReference type="NCBIfam" id="TIGR00674">
    <property type="entry name" value="dapA"/>
    <property type="match status" value="1"/>
</dbReference>
<dbReference type="PANTHER" id="PTHR12128:SF66">
    <property type="entry name" value="4-HYDROXY-2-OXOGLUTARATE ALDOLASE, MITOCHONDRIAL"/>
    <property type="match status" value="1"/>
</dbReference>
<dbReference type="PANTHER" id="PTHR12128">
    <property type="entry name" value="DIHYDRODIPICOLINATE SYNTHASE"/>
    <property type="match status" value="1"/>
</dbReference>
<dbReference type="Pfam" id="PF00701">
    <property type="entry name" value="DHDPS"/>
    <property type="match status" value="1"/>
</dbReference>
<dbReference type="PIRSF" id="PIRSF001365">
    <property type="entry name" value="DHDPS"/>
    <property type="match status" value="1"/>
</dbReference>
<dbReference type="PRINTS" id="PR00146">
    <property type="entry name" value="DHPICSNTHASE"/>
</dbReference>
<dbReference type="SMART" id="SM01130">
    <property type="entry name" value="DHDPS"/>
    <property type="match status" value="1"/>
</dbReference>
<dbReference type="SUPFAM" id="SSF51569">
    <property type="entry name" value="Aldolase"/>
    <property type="match status" value="1"/>
</dbReference>
<dbReference type="PROSITE" id="PS00666">
    <property type="entry name" value="DHDPS_2"/>
    <property type="match status" value="1"/>
</dbReference>
<feature type="chain" id="PRO_1000080544" description="4-hydroxy-tetrahydrodipicolinate synthase">
    <location>
        <begin position="1"/>
        <end position="311"/>
    </location>
</feature>
<feature type="active site" description="Proton donor/acceptor" evidence="1">
    <location>
        <position position="140"/>
    </location>
</feature>
<feature type="active site" description="Schiff-base intermediate with substrate" evidence="1">
    <location>
        <position position="168"/>
    </location>
</feature>
<feature type="binding site" evidence="1">
    <location>
        <position position="51"/>
    </location>
    <ligand>
        <name>pyruvate</name>
        <dbReference type="ChEBI" id="CHEBI:15361"/>
    </ligand>
</feature>
<feature type="binding site" evidence="1">
    <location>
        <position position="209"/>
    </location>
    <ligand>
        <name>pyruvate</name>
        <dbReference type="ChEBI" id="CHEBI:15361"/>
    </ligand>
</feature>
<feature type="site" description="Part of a proton relay during catalysis" evidence="1">
    <location>
        <position position="50"/>
    </location>
</feature>
<feature type="site" description="Part of a proton relay during catalysis" evidence="1">
    <location>
        <position position="114"/>
    </location>
</feature>
<gene>
    <name evidence="1" type="primary">dapA</name>
    <name type="ordered locus">SGO_1205</name>
</gene>